<gene>
    <name type="ordered locus">YALI0F11957g</name>
</gene>
<feature type="chain" id="PRO_0000383200" description="Succinate dehydrogenase assembly factor 2, mitochondrial">
    <location>
        <begin position="1"/>
        <end position="145"/>
    </location>
</feature>
<comment type="function">
    <text evidence="1">Plays an essential role in the assembly of succinate dehydrogenase (SDH), an enzyme complex (also referred to as respiratory complex II) that is a component of both the tricarboxylic acid (TCA) cycle and the mitochondrial electron transport chain, and which couples the oxidation of succinate to fumarate with the reduction of ubiquinone (coenzyme Q) to ubiquinol. Required for flavinylation (covalent attachment of FAD) of the flavoprotein subunit of the SDH catalytic dimer.</text>
</comment>
<comment type="subunit">
    <text evidence="1">Interacts with the flavoprotein subunit within the SDH catalytic dimer.</text>
</comment>
<comment type="subcellular location">
    <subcellularLocation>
        <location evidence="1">Mitochondrion matrix</location>
    </subcellularLocation>
</comment>
<comment type="miscellaneous">
    <text evidence="1">This protein may be expected to contain an N-terminal transit peptide but none has been predicted.</text>
</comment>
<comment type="similarity">
    <text evidence="1">Belongs to the SDHAF2 family.</text>
</comment>
<protein>
    <recommendedName>
        <fullName evidence="1">Succinate dehydrogenase assembly factor 2, mitochondrial</fullName>
        <shortName evidence="1">SDH assembly factor 2</shortName>
        <shortName evidence="1">SDHAF2</shortName>
    </recommendedName>
</protein>
<evidence type="ECO:0000255" key="1">
    <source>
        <dbReference type="HAMAP-Rule" id="MF_03057"/>
    </source>
</evidence>
<sequence>MLRLVRSSRAFHTSLIRAGTQANINPVAGKTADEVDVKIEPIPRHGEETETKRARLLYQSRKRGILETDLLLSRYAKLYLKDMTREELEEYDKLLDEPDWDIFYWATRNDNIKPCPERWAKSPVMEKLRELAENKEREVLRMPDL</sequence>
<organism>
    <name type="scientific">Yarrowia lipolytica (strain CLIB 122 / E 150)</name>
    <name type="common">Yeast</name>
    <name type="synonym">Candida lipolytica</name>
    <dbReference type="NCBI Taxonomy" id="284591"/>
    <lineage>
        <taxon>Eukaryota</taxon>
        <taxon>Fungi</taxon>
        <taxon>Dikarya</taxon>
        <taxon>Ascomycota</taxon>
        <taxon>Saccharomycotina</taxon>
        <taxon>Dipodascomycetes</taxon>
        <taxon>Dipodascales</taxon>
        <taxon>Dipodascales incertae sedis</taxon>
        <taxon>Yarrowia</taxon>
    </lineage>
</organism>
<dbReference type="EMBL" id="CR382132">
    <property type="protein sequence ID" value="CAG78117.1"/>
    <property type="molecule type" value="Genomic_DNA"/>
</dbReference>
<dbReference type="RefSeq" id="XP_505310.1">
    <property type="nucleotide sequence ID" value="XM_505310.1"/>
</dbReference>
<dbReference type="SMR" id="Q6C202"/>
<dbReference type="FunCoup" id="Q6C202">
    <property type="interactions" value="322"/>
</dbReference>
<dbReference type="STRING" id="284591.Q6C202"/>
<dbReference type="EnsemblFungi" id="CAG78117">
    <property type="protein sequence ID" value="CAG78117"/>
    <property type="gene ID" value="YALI0_F11957g"/>
</dbReference>
<dbReference type="KEGG" id="yli:2908266"/>
<dbReference type="VEuPathDB" id="FungiDB:YALI0_F11957g"/>
<dbReference type="HOGENOM" id="CLU_103054_0_1_1"/>
<dbReference type="InParanoid" id="Q6C202"/>
<dbReference type="OMA" id="DTEIMRM"/>
<dbReference type="OrthoDB" id="112099at4891"/>
<dbReference type="Proteomes" id="UP000001300">
    <property type="component" value="Chromosome F"/>
</dbReference>
<dbReference type="GO" id="GO:0005759">
    <property type="term" value="C:mitochondrial matrix"/>
    <property type="evidence" value="ECO:0000250"/>
    <property type="project" value="UniProtKB"/>
</dbReference>
<dbReference type="GO" id="GO:0005739">
    <property type="term" value="C:mitochondrion"/>
    <property type="evidence" value="ECO:0000318"/>
    <property type="project" value="GO_Central"/>
</dbReference>
<dbReference type="GO" id="GO:0006121">
    <property type="term" value="P:mitochondrial electron transport, succinate to ubiquinone"/>
    <property type="evidence" value="ECO:0000250"/>
    <property type="project" value="UniProtKB"/>
</dbReference>
<dbReference type="GO" id="GO:0034553">
    <property type="term" value="P:mitochondrial respiratory chain complex II assembly"/>
    <property type="evidence" value="ECO:0000318"/>
    <property type="project" value="GO_Central"/>
</dbReference>
<dbReference type="GO" id="GO:0018293">
    <property type="term" value="P:protein-FAD linkage"/>
    <property type="evidence" value="ECO:0000250"/>
    <property type="project" value="UniProtKB"/>
</dbReference>
<dbReference type="GO" id="GO:0006099">
    <property type="term" value="P:tricarboxylic acid cycle"/>
    <property type="evidence" value="ECO:0000318"/>
    <property type="project" value="GO_Central"/>
</dbReference>
<dbReference type="FunFam" id="1.10.150.250:FF:000002">
    <property type="entry name" value="Succinate dehydrogenase assembly factor 2, mitochondrial"/>
    <property type="match status" value="1"/>
</dbReference>
<dbReference type="Gene3D" id="1.10.150.250">
    <property type="entry name" value="Flavinator of succinate dehydrogenase"/>
    <property type="match status" value="1"/>
</dbReference>
<dbReference type="HAMAP" id="MF_03057">
    <property type="entry name" value="SDHAF2"/>
    <property type="match status" value="1"/>
</dbReference>
<dbReference type="InterPro" id="IPR005631">
    <property type="entry name" value="SDH"/>
</dbReference>
<dbReference type="InterPro" id="IPR036714">
    <property type="entry name" value="SDH_sf"/>
</dbReference>
<dbReference type="InterPro" id="IPR028882">
    <property type="entry name" value="SDHAF2"/>
</dbReference>
<dbReference type="PANTHER" id="PTHR12469">
    <property type="entry name" value="PROTEIN EMI5 HOMOLOG, MITOCHONDRIAL"/>
    <property type="match status" value="1"/>
</dbReference>
<dbReference type="PANTHER" id="PTHR12469:SF2">
    <property type="entry name" value="SUCCINATE DEHYDROGENASE ASSEMBLY FACTOR 2, MITOCHONDRIAL"/>
    <property type="match status" value="1"/>
</dbReference>
<dbReference type="Pfam" id="PF03937">
    <property type="entry name" value="Sdh5"/>
    <property type="match status" value="1"/>
</dbReference>
<dbReference type="SUPFAM" id="SSF109910">
    <property type="entry name" value="YgfY-like"/>
    <property type="match status" value="1"/>
</dbReference>
<reference key="1">
    <citation type="journal article" date="2004" name="Nature">
        <title>Genome evolution in yeasts.</title>
        <authorList>
            <person name="Dujon B."/>
            <person name="Sherman D."/>
            <person name="Fischer G."/>
            <person name="Durrens P."/>
            <person name="Casaregola S."/>
            <person name="Lafontaine I."/>
            <person name="de Montigny J."/>
            <person name="Marck C."/>
            <person name="Neuveglise C."/>
            <person name="Talla E."/>
            <person name="Goffard N."/>
            <person name="Frangeul L."/>
            <person name="Aigle M."/>
            <person name="Anthouard V."/>
            <person name="Babour A."/>
            <person name="Barbe V."/>
            <person name="Barnay S."/>
            <person name="Blanchin S."/>
            <person name="Beckerich J.-M."/>
            <person name="Beyne E."/>
            <person name="Bleykasten C."/>
            <person name="Boisrame A."/>
            <person name="Boyer J."/>
            <person name="Cattolico L."/>
            <person name="Confanioleri F."/>
            <person name="de Daruvar A."/>
            <person name="Despons L."/>
            <person name="Fabre E."/>
            <person name="Fairhead C."/>
            <person name="Ferry-Dumazet H."/>
            <person name="Groppi A."/>
            <person name="Hantraye F."/>
            <person name="Hennequin C."/>
            <person name="Jauniaux N."/>
            <person name="Joyet P."/>
            <person name="Kachouri R."/>
            <person name="Kerrest A."/>
            <person name="Koszul R."/>
            <person name="Lemaire M."/>
            <person name="Lesur I."/>
            <person name="Ma L."/>
            <person name="Muller H."/>
            <person name="Nicaud J.-M."/>
            <person name="Nikolski M."/>
            <person name="Oztas S."/>
            <person name="Ozier-Kalogeropoulos O."/>
            <person name="Pellenz S."/>
            <person name="Potier S."/>
            <person name="Richard G.-F."/>
            <person name="Straub M.-L."/>
            <person name="Suleau A."/>
            <person name="Swennen D."/>
            <person name="Tekaia F."/>
            <person name="Wesolowski-Louvel M."/>
            <person name="Westhof E."/>
            <person name="Wirth B."/>
            <person name="Zeniou-Meyer M."/>
            <person name="Zivanovic Y."/>
            <person name="Bolotin-Fukuhara M."/>
            <person name="Thierry A."/>
            <person name="Bouchier C."/>
            <person name="Caudron B."/>
            <person name="Scarpelli C."/>
            <person name="Gaillardin C."/>
            <person name="Weissenbach J."/>
            <person name="Wincker P."/>
            <person name="Souciet J.-L."/>
        </authorList>
    </citation>
    <scope>NUCLEOTIDE SEQUENCE [LARGE SCALE GENOMIC DNA]</scope>
    <source>
        <strain>CLIB 122 / E 150</strain>
    </source>
</reference>
<accession>Q6C202</accession>
<keyword id="KW-0143">Chaperone</keyword>
<keyword id="KW-0496">Mitochondrion</keyword>
<keyword id="KW-1185">Reference proteome</keyword>
<name>SDHF2_YARLI</name>
<proteinExistence type="inferred from homology"/>